<reference key="1">
    <citation type="journal article" date="2006" name="Genome Biol.">
        <title>Genomic analysis reveals that Pseudomonas aeruginosa virulence is combinatorial.</title>
        <authorList>
            <person name="Lee D.G."/>
            <person name="Urbach J.M."/>
            <person name="Wu G."/>
            <person name="Liberati N.T."/>
            <person name="Feinbaum R.L."/>
            <person name="Miyata S."/>
            <person name="Diggins L.T."/>
            <person name="He J."/>
            <person name="Saucier M."/>
            <person name="Deziel E."/>
            <person name="Friedman L."/>
            <person name="Li L."/>
            <person name="Grills G."/>
            <person name="Montgomery K."/>
            <person name="Kucherlapati R."/>
            <person name="Rahme L.G."/>
            <person name="Ausubel F.M."/>
        </authorList>
    </citation>
    <scope>NUCLEOTIDE SEQUENCE [LARGE SCALE GENOMIC DNA]</scope>
    <source>
        <strain>UCBPP-PA14</strain>
    </source>
</reference>
<evidence type="ECO:0000255" key="1">
    <source>
        <dbReference type="HAMAP-Rule" id="MF_00063"/>
    </source>
</evidence>
<evidence type="ECO:0000256" key="2">
    <source>
        <dbReference type="SAM" id="MobiDB-lite"/>
    </source>
</evidence>
<accession>Q02KP7</accession>
<gene>
    <name evidence="1" type="primary">cysH</name>
    <name type="ordered locus">PA14_41840</name>
</gene>
<sequence>MPPFATIPATERNSAAQHQDPSPMSQPFDLPALASSLADKSPQDILKAAFEHFGDELWISFSGAEDVVLVDMAWKLNRNVKVFSLDTGRLHPETYRFIDQVREHYGIAIDVLSPDPRLLEPLVKEKGLFSFYRDGHGECCGIRKIEPLKRKLAGVRAWATGQRRDQSPGTRSQVAVLEIDGAFSTPEKPLYKFNPLSSMTSEEVWGYIRMLELPYNSLHERGYISIGCEPCTRPVLPNQHEREGRWWWEEATHKECGLHAGNLISKA</sequence>
<dbReference type="EC" id="1.8.4.10" evidence="1"/>
<dbReference type="EMBL" id="CP000438">
    <property type="protein sequence ID" value="ABJ10942.1"/>
    <property type="molecule type" value="Genomic_DNA"/>
</dbReference>
<dbReference type="RefSeq" id="WP_003120317.1">
    <property type="nucleotide sequence ID" value="NZ_CP034244.1"/>
</dbReference>
<dbReference type="SMR" id="Q02KP7"/>
<dbReference type="KEGG" id="pau:PA14_41840"/>
<dbReference type="PseudoCAP" id="PA14_41840"/>
<dbReference type="HOGENOM" id="CLU_044089_1_0_6"/>
<dbReference type="BioCyc" id="PAER208963:G1G74-3507-MONOMER"/>
<dbReference type="Proteomes" id="UP000000653">
    <property type="component" value="Chromosome"/>
</dbReference>
<dbReference type="GO" id="GO:0005737">
    <property type="term" value="C:cytoplasm"/>
    <property type="evidence" value="ECO:0007669"/>
    <property type="project" value="UniProtKB-SubCell"/>
</dbReference>
<dbReference type="GO" id="GO:0051539">
    <property type="term" value="F:4 iron, 4 sulfur cluster binding"/>
    <property type="evidence" value="ECO:0007669"/>
    <property type="project" value="UniProtKB-UniRule"/>
</dbReference>
<dbReference type="GO" id="GO:0043866">
    <property type="term" value="F:adenylyl-sulfate reductase (thioredoxin) activity"/>
    <property type="evidence" value="ECO:0007669"/>
    <property type="project" value="UniProtKB-EC"/>
</dbReference>
<dbReference type="GO" id="GO:0046872">
    <property type="term" value="F:metal ion binding"/>
    <property type="evidence" value="ECO:0007669"/>
    <property type="project" value="UniProtKB-KW"/>
</dbReference>
<dbReference type="GO" id="GO:0004604">
    <property type="term" value="F:phosphoadenylyl-sulfate reductase (thioredoxin) activity"/>
    <property type="evidence" value="ECO:0007669"/>
    <property type="project" value="UniProtKB-UniRule"/>
</dbReference>
<dbReference type="GO" id="GO:0019344">
    <property type="term" value="P:cysteine biosynthetic process"/>
    <property type="evidence" value="ECO:0007669"/>
    <property type="project" value="InterPro"/>
</dbReference>
<dbReference type="GO" id="GO:0070814">
    <property type="term" value="P:hydrogen sulfide biosynthetic process"/>
    <property type="evidence" value="ECO:0007669"/>
    <property type="project" value="UniProtKB-UniRule"/>
</dbReference>
<dbReference type="GO" id="GO:0019379">
    <property type="term" value="P:sulfate assimilation, phosphoadenylyl sulfate reduction by phosphoadenylyl-sulfate reductase (thioredoxin)"/>
    <property type="evidence" value="ECO:0007669"/>
    <property type="project" value="UniProtKB-UniRule"/>
</dbReference>
<dbReference type="CDD" id="cd23945">
    <property type="entry name" value="PAPS_reductase"/>
    <property type="match status" value="1"/>
</dbReference>
<dbReference type="FunFam" id="3.40.50.620:FF:000153">
    <property type="entry name" value="Phosphoadenosine phosphosulfate reductase"/>
    <property type="match status" value="1"/>
</dbReference>
<dbReference type="Gene3D" id="3.40.50.620">
    <property type="entry name" value="HUPs"/>
    <property type="match status" value="1"/>
</dbReference>
<dbReference type="HAMAP" id="MF_00063">
    <property type="entry name" value="CysH"/>
    <property type="match status" value="1"/>
</dbReference>
<dbReference type="InterPro" id="IPR011798">
    <property type="entry name" value="APS_reductase"/>
</dbReference>
<dbReference type="InterPro" id="IPR004511">
    <property type="entry name" value="PAPS/APS_Rdtase"/>
</dbReference>
<dbReference type="InterPro" id="IPR002500">
    <property type="entry name" value="PAPS_reduct_dom"/>
</dbReference>
<dbReference type="InterPro" id="IPR014729">
    <property type="entry name" value="Rossmann-like_a/b/a_fold"/>
</dbReference>
<dbReference type="NCBIfam" id="TIGR02055">
    <property type="entry name" value="APS_reductase"/>
    <property type="match status" value="1"/>
</dbReference>
<dbReference type="NCBIfam" id="TIGR00434">
    <property type="entry name" value="cysH"/>
    <property type="match status" value="1"/>
</dbReference>
<dbReference type="NCBIfam" id="NF002537">
    <property type="entry name" value="PRK02090.1"/>
    <property type="match status" value="1"/>
</dbReference>
<dbReference type="PANTHER" id="PTHR46482:SF9">
    <property type="entry name" value="5'-ADENYLYLSULFATE REDUCTASE 1, CHLOROPLASTIC"/>
    <property type="match status" value="1"/>
</dbReference>
<dbReference type="PANTHER" id="PTHR46482">
    <property type="entry name" value="5'-ADENYLYLSULFATE REDUCTASE 3, CHLOROPLASTIC"/>
    <property type="match status" value="1"/>
</dbReference>
<dbReference type="Pfam" id="PF01507">
    <property type="entry name" value="PAPS_reduct"/>
    <property type="match status" value="1"/>
</dbReference>
<dbReference type="PIRSF" id="PIRSF000857">
    <property type="entry name" value="PAPS_reductase"/>
    <property type="match status" value="1"/>
</dbReference>
<dbReference type="SUPFAM" id="SSF52402">
    <property type="entry name" value="Adenine nucleotide alpha hydrolases-like"/>
    <property type="match status" value="1"/>
</dbReference>
<feature type="chain" id="PRO_1000008933" description="Adenosine 5'-phosphosulfate reductase">
    <location>
        <begin position="1"/>
        <end position="267"/>
    </location>
</feature>
<feature type="region of interest" description="Disordered" evidence="2">
    <location>
        <begin position="1"/>
        <end position="29"/>
    </location>
</feature>
<feature type="compositionally biased region" description="Polar residues" evidence="2">
    <location>
        <begin position="11"/>
        <end position="25"/>
    </location>
</feature>
<feature type="active site" description="Nucleophile; cysteine thiosulfonate intermediate" evidence="1">
    <location>
        <position position="256"/>
    </location>
</feature>
<feature type="binding site" evidence="1">
    <location>
        <position position="139"/>
    </location>
    <ligand>
        <name>[4Fe-4S] cluster</name>
        <dbReference type="ChEBI" id="CHEBI:49883"/>
    </ligand>
</feature>
<feature type="binding site" evidence="1">
    <location>
        <position position="140"/>
    </location>
    <ligand>
        <name>[4Fe-4S] cluster</name>
        <dbReference type="ChEBI" id="CHEBI:49883"/>
    </ligand>
</feature>
<feature type="binding site" evidence="1">
    <location>
        <position position="228"/>
    </location>
    <ligand>
        <name>[4Fe-4S] cluster</name>
        <dbReference type="ChEBI" id="CHEBI:49883"/>
    </ligand>
</feature>
<feature type="binding site" evidence="1">
    <location>
        <position position="231"/>
    </location>
    <ligand>
        <name>[4Fe-4S] cluster</name>
        <dbReference type="ChEBI" id="CHEBI:49883"/>
    </ligand>
</feature>
<name>CYSH_PSEAB</name>
<protein>
    <recommendedName>
        <fullName evidence="1">Adenosine 5'-phosphosulfate reductase</fullName>
        <shortName evidence="1">APS reductase</shortName>
        <ecNumber evidence="1">1.8.4.10</ecNumber>
    </recommendedName>
    <alternativeName>
        <fullName evidence="1">5'-adenylylsulfate reductase</fullName>
    </alternativeName>
    <alternativeName>
        <fullName evidence="1">Thioredoxin-dependent 5'-adenylylsulfate reductase</fullName>
    </alternativeName>
</protein>
<comment type="function">
    <text evidence="1">Catalyzes the formation of sulfite from adenosine 5'-phosphosulfate (APS) using thioredoxin as an electron donor.</text>
</comment>
<comment type="catalytic activity">
    <reaction evidence="1">
        <text>[thioredoxin]-disulfide + sulfite + AMP + 2 H(+) = adenosine 5'-phosphosulfate + [thioredoxin]-dithiol</text>
        <dbReference type="Rhea" id="RHEA:21976"/>
        <dbReference type="Rhea" id="RHEA-COMP:10698"/>
        <dbReference type="Rhea" id="RHEA-COMP:10700"/>
        <dbReference type="ChEBI" id="CHEBI:15378"/>
        <dbReference type="ChEBI" id="CHEBI:17359"/>
        <dbReference type="ChEBI" id="CHEBI:29950"/>
        <dbReference type="ChEBI" id="CHEBI:50058"/>
        <dbReference type="ChEBI" id="CHEBI:58243"/>
        <dbReference type="ChEBI" id="CHEBI:456215"/>
        <dbReference type="EC" id="1.8.4.10"/>
    </reaction>
</comment>
<comment type="cofactor">
    <cofactor evidence="1">
        <name>[4Fe-4S] cluster</name>
        <dbReference type="ChEBI" id="CHEBI:49883"/>
    </cofactor>
    <text evidence="1">Binds 1 [4Fe-4S] cluster per subunit.</text>
</comment>
<comment type="pathway">
    <text evidence="1">Sulfur metabolism; hydrogen sulfide biosynthesis; sulfite from sulfate.</text>
</comment>
<comment type="subcellular location">
    <subcellularLocation>
        <location evidence="1">Cytoplasm</location>
    </subcellularLocation>
</comment>
<comment type="similarity">
    <text evidence="1">Belongs to the PAPS reductase family. CysH subfamily.</text>
</comment>
<keyword id="KW-0963">Cytoplasm</keyword>
<keyword id="KW-0408">Iron</keyword>
<keyword id="KW-0411">Iron-sulfur</keyword>
<keyword id="KW-0479">Metal-binding</keyword>
<keyword id="KW-0560">Oxidoreductase</keyword>
<organism>
    <name type="scientific">Pseudomonas aeruginosa (strain UCBPP-PA14)</name>
    <dbReference type="NCBI Taxonomy" id="208963"/>
    <lineage>
        <taxon>Bacteria</taxon>
        <taxon>Pseudomonadati</taxon>
        <taxon>Pseudomonadota</taxon>
        <taxon>Gammaproteobacteria</taxon>
        <taxon>Pseudomonadales</taxon>
        <taxon>Pseudomonadaceae</taxon>
        <taxon>Pseudomonas</taxon>
    </lineage>
</organism>
<proteinExistence type="inferred from homology"/>